<comment type="function">
    <text evidence="1">Involved in B-lymphocyte antigen receptor signaling and germinal center formation.</text>
</comment>
<comment type="interaction">
    <interactant intactId="EBI-6426464">
        <id>Q8WZ60</id>
    </interactant>
    <interactant intactId="EBI-358049">
        <id>Q13895</id>
        <label>BYSL</label>
    </interactant>
    <organismsDiffer>false</organismsDiffer>
    <experiments>3</experiments>
</comment>
<comment type="interaction">
    <interactant intactId="EBI-6426464">
        <id>Q8WZ60</id>
    </interactant>
    <interactant intactId="EBI-2212355">
        <id>Q49AN0</id>
        <label>CRY2</label>
    </interactant>
    <organismsDiffer>false</organismsDiffer>
    <experiments>5</experiments>
</comment>
<comment type="interaction">
    <interactant intactId="EBI-6426464">
        <id>Q8WZ60</id>
    </interactant>
    <interactant intactId="EBI-1050358">
        <id>P07954</id>
        <label>FH</label>
    </interactant>
    <organismsDiffer>false</organismsDiffer>
    <experiments>3</experiments>
</comment>
<comment type="interaction">
    <interactant intactId="EBI-6426464">
        <id>Q8WZ60</id>
    </interactant>
    <interactant intactId="EBI-744342">
        <id>Q8IVD9</id>
        <label>NUDCD3</label>
    </interactant>
    <organismsDiffer>false</organismsDiffer>
    <experiments>3</experiments>
</comment>
<comment type="interaction">
    <interactant intactId="EBI-6426464">
        <id>Q8WZ60</id>
    </interactant>
    <interactant intactId="EBI-722119">
        <id>Q9UD71</id>
        <label>PPP1R1B</label>
    </interactant>
    <organismsDiffer>false</organismsDiffer>
    <experiments>3</experiments>
</comment>
<comment type="interaction">
    <interactant intactId="EBI-6426464">
        <id>Q8WZ60</id>
    </interactant>
    <interactant intactId="EBI-21251460">
        <id>O60260-5</id>
        <label>PRKN</label>
    </interactant>
    <organismsDiffer>false</organismsDiffer>
    <experiments>3</experiments>
</comment>
<comment type="interaction">
    <interactant intactId="EBI-6426464">
        <id>Q8WZ60</id>
    </interactant>
    <interactant intactId="EBI-1046471">
        <id>Q9Y3A5</id>
        <label>SBDS</label>
    </interactant>
    <organismsDiffer>false</organismsDiffer>
    <experiments>3</experiments>
</comment>
<comment type="interaction">
    <interactant intactId="EBI-6426464">
        <id>Q8WZ60</id>
    </interactant>
    <interactant intactId="EBI-455283">
        <id>P42167</id>
        <label>TMPO</label>
    </interactant>
    <organismsDiffer>false</organismsDiffer>
    <experiments>3</experiments>
</comment>
<comment type="tissue specificity">
    <text evidence="3">Found in germinal center B-cells.</text>
</comment>
<comment type="sequence caution" evidence="4">
    <conflict type="erroneous initiation">
        <sequence resource="EMBL-CDS" id="AAH32348"/>
    </conflict>
</comment>
<comment type="sequence caution" evidence="4">
    <conflict type="erroneous initiation">
        <sequence resource="EMBL-CDS" id="AAL35594"/>
    </conflict>
</comment>
<comment type="sequence caution" evidence="4">
    <conflict type="erroneous initiation">
        <sequence resource="EMBL-CDS" id="BAG37078"/>
    </conflict>
</comment>
<organism>
    <name type="scientific">Homo sapiens</name>
    <name type="common">Human</name>
    <dbReference type="NCBI Taxonomy" id="9606"/>
    <lineage>
        <taxon>Eukaryota</taxon>
        <taxon>Metazoa</taxon>
        <taxon>Chordata</taxon>
        <taxon>Craniata</taxon>
        <taxon>Vertebrata</taxon>
        <taxon>Euteleostomi</taxon>
        <taxon>Mammalia</taxon>
        <taxon>Eutheria</taxon>
        <taxon>Euarchontoglires</taxon>
        <taxon>Primates</taxon>
        <taxon>Haplorrhini</taxon>
        <taxon>Catarrhini</taxon>
        <taxon>Hominidae</taxon>
        <taxon>Homo</taxon>
    </lineage>
</organism>
<sequence>MLMAGQRGAWTMGDVVEKSLEGPLAPSTDEPSQKTGDLVEILNGEKVKFDDAGLSLILQNGLETLRMENALTDVILCVDIQEFSCHRVVLAAASNYFRAMFCNDLKEKYEKRIIIKGVDAETMHTLLDYTYTSKALITKQNVQRVLEAANLFQFLRMVDACASFLTEALNPENCVGILRLADTHSLDSLKKQVQSYIIQNFVQILNSEEFLDLPVDTLHHILKSDDLYVTEEAQVFETVMSWVRHKPSERLCLLPYVLENVRLPLLDPWYFVETVEADPLIRQCPEVFPLLQEARMYHLSGNEIISERTKPRMHEFQSEVFMIIGGCTKDERFVAEVTCLDPLRRSRLEVAKLPLTEHELESENKKWVEFACVTLKNEVYISGGKETQHDVWKYNSSINKWIQIEYLNIGRWRHKMVVLGGKVYVIGGFDGLQRINNVETYDPFHNCWSEAAPLLVHVSSFAATSHKKKLYVIGGGPNGKLATDKTQCYDPSTNKWSLKAAMPVEAKCINAVSFRDRIYVVGGAMRALYAYSPLEDSWCLVTQLSHERASCGIAPCNNRLYITGGRDEKNEVIATVLCWDPEAQKLTEECVLPRGVSHHGSVTIRKSYTHIRRIVPGAVSV</sequence>
<evidence type="ECO:0000250" key="1"/>
<evidence type="ECO:0000255" key="2">
    <source>
        <dbReference type="PROSITE-ProRule" id="PRU00037"/>
    </source>
</evidence>
<evidence type="ECO:0000269" key="3">
    <source>
    </source>
</evidence>
<evidence type="ECO:0000305" key="4"/>
<accession>Q8WZ60</accession>
<accession>B2RB31</accession>
<accession>D3DNS8</accession>
<accession>Q8N5I1</accession>
<accession>Q8N892</accession>
<proteinExistence type="evidence at protein level"/>
<feature type="chain" id="PRO_0000119106" description="Kelch-like protein 6">
    <location>
        <begin position="1"/>
        <end position="621"/>
    </location>
</feature>
<feature type="domain" description="BTB" evidence="2">
    <location>
        <begin position="72"/>
        <end position="139"/>
    </location>
</feature>
<feature type="domain" description="BACK">
    <location>
        <begin position="174"/>
        <end position="276"/>
    </location>
</feature>
<feature type="repeat" description="Kelch 1">
    <location>
        <begin position="320"/>
        <end position="367"/>
    </location>
</feature>
<feature type="repeat" description="Kelch 2">
    <location>
        <begin position="378"/>
        <end position="421"/>
    </location>
</feature>
<feature type="repeat" description="Kelch 3">
    <location>
        <begin position="422"/>
        <end position="468"/>
    </location>
</feature>
<feature type="repeat" description="Kelch 4">
    <location>
        <begin position="470"/>
        <end position="516"/>
    </location>
</feature>
<feature type="repeat" description="Kelch 5">
    <location>
        <begin position="517"/>
        <end position="558"/>
    </location>
</feature>
<feature type="repeat" description="Kelch 6">
    <location>
        <begin position="560"/>
        <end position="606"/>
    </location>
</feature>
<feature type="sequence variant" id="VAR_056125" description="In dbSNP:rs35354575.">
    <original>I</original>
    <variation>V</variation>
    <location>
        <position position="518"/>
    </location>
</feature>
<feature type="sequence conflict" description="In Ref. 5; AAL35594." evidence="4" ref="5">
    <original>T</original>
    <variation>R</variation>
    <location>
        <position position="11"/>
    </location>
</feature>
<feature type="sequence conflict" description="In Ref. 1; BAG37078." evidence="4" ref="1">
    <original>S</original>
    <variation>G</variation>
    <location>
        <position position="94"/>
    </location>
</feature>
<feature type="sequence conflict" description="In Ref. 1; BAG37078." evidence="4" ref="1">
    <original>R</original>
    <variation>G</variation>
    <location>
        <position position="112"/>
    </location>
</feature>
<feature type="sequence conflict" description="In Ref. 5; AAL35594." evidence="4" ref="5">
    <original>E</original>
    <variation>G</variation>
    <location>
        <position position="363"/>
    </location>
</feature>
<feature type="sequence conflict" description="In Ref. 1; BAG37078." evidence="4" ref="1">
    <original>K</original>
    <variation>R</variation>
    <location>
        <position position="495"/>
    </location>
</feature>
<reference key="1">
    <citation type="journal article" date="2004" name="Nat. Genet.">
        <title>Complete sequencing and characterization of 21,243 full-length human cDNAs.</title>
        <authorList>
            <person name="Ota T."/>
            <person name="Suzuki Y."/>
            <person name="Nishikawa T."/>
            <person name="Otsuki T."/>
            <person name="Sugiyama T."/>
            <person name="Irie R."/>
            <person name="Wakamatsu A."/>
            <person name="Hayashi K."/>
            <person name="Sato H."/>
            <person name="Nagai K."/>
            <person name="Kimura K."/>
            <person name="Makita H."/>
            <person name="Sekine M."/>
            <person name="Obayashi M."/>
            <person name="Nishi T."/>
            <person name="Shibahara T."/>
            <person name="Tanaka T."/>
            <person name="Ishii S."/>
            <person name="Yamamoto J."/>
            <person name="Saito K."/>
            <person name="Kawai Y."/>
            <person name="Isono Y."/>
            <person name="Nakamura Y."/>
            <person name="Nagahari K."/>
            <person name="Murakami K."/>
            <person name="Yasuda T."/>
            <person name="Iwayanagi T."/>
            <person name="Wagatsuma M."/>
            <person name="Shiratori A."/>
            <person name="Sudo H."/>
            <person name="Hosoiri T."/>
            <person name="Kaku Y."/>
            <person name="Kodaira H."/>
            <person name="Kondo H."/>
            <person name="Sugawara M."/>
            <person name="Takahashi M."/>
            <person name="Kanda K."/>
            <person name="Yokoi T."/>
            <person name="Furuya T."/>
            <person name="Kikkawa E."/>
            <person name="Omura Y."/>
            <person name="Abe K."/>
            <person name="Kamihara K."/>
            <person name="Katsuta N."/>
            <person name="Sato K."/>
            <person name="Tanikawa M."/>
            <person name="Yamazaki M."/>
            <person name="Ninomiya K."/>
            <person name="Ishibashi T."/>
            <person name="Yamashita H."/>
            <person name="Murakawa K."/>
            <person name="Fujimori K."/>
            <person name="Tanai H."/>
            <person name="Kimata M."/>
            <person name="Watanabe M."/>
            <person name="Hiraoka S."/>
            <person name="Chiba Y."/>
            <person name="Ishida S."/>
            <person name="Ono Y."/>
            <person name="Takiguchi S."/>
            <person name="Watanabe S."/>
            <person name="Yosida M."/>
            <person name="Hotuta T."/>
            <person name="Kusano J."/>
            <person name="Kanehori K."/>
            <person name="Takahashi-Fujii A."/>
            <person name="Hara H."/>
            <person name="Tanase T.-O."/>
            <person name="Nomura Y."/>
            <person name="Togiya S."/>
            <person name="Komai F."/>
            <person name="Hara R."/>
            <person name="Takeuchi K."/>
            <person name="Arita M."/>
            <person name="Imose N."/>
            <person name="Musashino K."/>
            <person name="Yuuki H."/>
            <person name="Oshima A."/>
            <person name="Sasaki N."/>
            <person name="Aotsuka S."/>
            <person name="Yoshikawa Y."/>
            <person name="Matsunawa H."/>
            <person name="Ichihara T."/>
            <person name="Shiohata N."/>
            <person name="Sano S."/>
            <person name="Moriya S."/>
            <person name="Momiyama H."/>
            <person name="Satoh N."/>
            <person name="Takami S."/>
            <person name="Terashima Y."/>
            <person name="Suzuki O."/>
            <person name="Nakagawa S."/>
            <person name="Senoh A."/>
            <person name="Mizoguchi H."/>
            <person name="Goto Y."/>
            <person name="Shimizu F."/>
            <person name="Wakebe H."/>
            <person name="Hishigaki H."/>
            <person name="Watanabe T."/>
            <person name="Sugiyama A."/>
            <person name="Takemoto M."/>
            <person name="Kawakami B."/>
            <person name="Yamazaki M."/>
            <person name="Watanabe K."/>
            <person name="Kumagai A."/>
            <person name="Itakura S."/>
            <person name="Fukuzumi Y."/>
            <person name="Fujimori Y."/>
            <person name="Komiyama M."/>
            <person name="Tashiro H."/>
            <person name="Tanigami A."/>
            <person name="Fujiwara T."/>
            <person name="Ono T."/>
            <person name="Yamada K."/>
            <person name="Fujii Y."/>
            <person name="Ozaki K."/>
            <person name="Hirao M."/>
            <person name="Ohmori Y."/>
            <person name="Kawabata A."/>
            <person name="Hikiji T."/>
            <person name="Kobatake N."/>
            <person name="Inagaki H."/>
            <person name="Ikema Y."/>
            <person name="Okamoto S."/>
            <person name="Okitani R."/>
            <person name="Kawakami T."/>
            <person name="Noguchi S."/>
            <person name="Itoh T."/>
            <person name="Shigeta K."/>
            <person name="Senba T."/>
            <person name="Matsumura K."/>
            <person name="Nakajima Y."/>
            <person name="Mizuno T."/>
            <person name="Morinaga M."/>
            <person name="Sasaki M."/>
            <person name="Togashi T."/>
            <person name="Oyama M."/>
            <person name="Hata H."/>
            <person name="Watanabe M."/>
            <person name="Komatsu T."/>
            <person name="Mizushima-Sugano J."/>
            <person name="Satoh T."/>
            <person name="Shirai Y."/>
            <person name="Takahashi Y."/>
            <person name="Nakagawa K."/>
            <person name="Okumura K."/>
            <person name="Nagase T."/>
            <person name="Nomura N."/>
            <person name="Kikuchi H."/>
            <person name="Masuho Y."/>
            <person name="Yamashita R."/>
            <person name="Nakai K."/>
            <person name="Yada T."/>
            <person name="Nakamura Y."/>
            <person name="Ohara O."/>
            <person name="Isogai T."/>
            <person name="Sugano S."/>
        </authorList>
    </citation>
    <scope>NUCLEOTIDE SEQUENCE [LARGE SCALE MRNA]</scope>
    <source>
        <tissue>Spleen</tissue>
        <tissue>Thymus</tissue>
    </source>
</reference>
<reference key="2">
    <citation type="journal article" date="2006" name="Nature">
        <title>The DNA sequence, annotation and analysis of human chromosome 3.</title>
        <authorList>
            <person name="Muzny D.M."/>
            <person name="Scherer S.E."/>
            <person name="Kaul R."/>
            <person name="Wang J."/>
            <person name="Yu J."/>
            <person name="Sudbrak R."/>
            <person name="Buhay C.J."/>
            <person name="Chen R."/>
            <person name="Cree A."/>
            <person name="Ding Y."/>
            <person name="Dugan-Rocha S."/>
            <person name="Gill R."/>
            <person name="Gunaratne P."/>
            <person name="Harris R.A."/>
            <person name="Hawes A.C."/>
            <person name="Hernandez J."/>
            <person name="Hodgson A.V."/>
            <person name="Hume J."/>
            <person name="Jackson A."/>
            <person name="Khan Z.M."/>
            <person name="Kovar-Smith C."/>
            <person name="Lewis L.R."/>
            <person name="Lozado R.J."/>
            <person name="Metzker M.L."/>
            <person name="Milosavljevic A."/>
            <person name="Miner G.R."/>
            <person name="Morgan M.B."/>
            <person name="Nazareth L.V."/>
            <person name="Scott G."/>
            <person name="Sodergren E."/>
            <person name="Song X.-Z."/>
            <person name="Steffen D."/>
            <person name="Wei S."/>
            <person name="Wheeler D.A."/>
            <person name="Wright M.W."/>
            <person name="Worley K.C."/>
            <person name="Yuan Y."/>
            <person name="Zhang Z."/>
            <person name="Adams C.Q."/>
            <person name="Ansari-Lari M.A."/>
            <person name="Ayele M."/>
            <person name="Brown M.J."/>
            <person name="Chen G."/>
            <person name="Chen Z."/>
            <person name="Clendenning J."/>
            <person name="Clerc-Blankenburg K.P."/>
            <person name="Chen R."/>
            <person name="Chen Z."/>
            <person name="Davis C."/>
            <person name="Delgado O."/>
            <person name="Dinh H.H."/>
            <person name="Dong W."/>
            <person name="Draper H."/>
            <person name="Ernst S."/>
            <person name="Fu G."/>
            <person name="Gonzalez-Garay M.L."/>
            <person name="Garcia D.K."/>
            <person name="Gillett W."/>
            <person name="Gu J."/>
            <person name="Hao B."/>
            <person name="Haugen E."/>
            <person name="Havlak P."/>
            <person name="He X."/>
            <person name="Hennig S."/>
            <person name="Hu S."/>
            <person name="Huang W."/>
            <person name="Jackson L.R."/>
            <person name="Jacob L.S."/>
            <person name="Kelly S.H."/>
            <person name="Kube M."/>
            <person name="Levy R."/>
            <person name="Li Z."/>
            <person name="Liu B."/>
            <person name="Liu J."/>
            <person name="Liu W."/>
            <person name="Lu J."/>
            <person name="Maheshwari M."/>
            <person name="Nguyen B.-V."/>
            <person name="Okwuonu G.O."/>
            <person name="Palmeiri A."/>
            <person name="Pasternak S."/>
            <person name="Perez L.M."/>
            <person name="Phelps K.A."/>
            <person name="Plopper F.J."/>
            <person name="Qiang B."/>
            <person name="Raymond C."/>
            <person name="Rodriguez R."/>
            <person name="Saenphimmachak C."/>
            <person name="Santibanez J."/>
            <person name="Shen H."/>
            <person name="Shen Y."/>
            <person name="Subramanian S."/>
            <person name="Tabor P.E."/>
            <person name="Verduzco D."/>
            <person name="Waldron L."/>
            <person name="Wang J."/>
            <person name="Wang J."/>
            <person name="Wang Q."/>
            <person name="Williams G.A."/>
            <person name="Wong G.K.-S."/>
            <person name="Yao Z."/>
            <person name="Zhang J."/>
            <person name="Zhang X."/>
            <person name="Zhao G."/>
            <person name="Zhou J."/>
            <person name="Zhou Y."/>
            <person name="Nelson D."/>
            <person name="Lehrach H."/>
            <person name="Reinhardt R."/>
            <person name="Naylor S.L."/>
            <person name="Yang H."/>
            <person name="Olson M."/>
            <person name="Weinstock G."/>
            <person name="Gibbs R.A."/>
        </authorList>
    </citation>
    <scope>NUCLEOTIDE SEQUENCE [LARGE SCALE GENOMIC DNA]</scope>
</reference>
<reference key="3">
    <citation type="submission" date="2005-09" db="EMBL/GenBank/DDBJ databases">
        <authorList>
            <person name="Mural R.J."/>
            <person name="Istrail S."/>
            <person name="Sutton G.G."/>
            <person name="Florea L."/>
            <person name="Halpern A.L."/>
            <person name="Mobarry C.M."/>
            <person name="Lippert R."/>
            <person name="Walenz B."/>
            <person name="Shatkay H."/>
            <person name="Dew I."/>
            <person name="Miller J.R."/>
            <person name="Flanigan M.J."/>
            <person name="Edwards N.J."/>
            <person name="Bolanos R."/>
            <person name="Fasulo D."/>
            <person name="Halldorsson B.V."/>
            <person name="Hannenhalli S."/>
            <person name="Turner R."/>
            <person name="Yooseph S."/>
            <person name="Lu F."/>
            <person name="Nusskern D.R."/>
            <person name="Shue B.C."/>
            <person name="Zheng X.H."/>
            <person name="Zhong F."/>
            <person name="Delcher A.L."/>
            <person name="Huson D.H."/>
            <person name="Kravitz S.A."/>
            <person name="Mouchard L."/>
            <person name="Reinert K."/>
            <person name="Remington K.A."/>
            <person name="Clark A.G."/>
            <person name="Waterman M.S."/>
            <person name="Eichler E.E."/>
            <person name="Adams M.D."/>
            <person name="Hunkapiller M.W."/>
            <person name="Myers E.W."/>
            <person name="Venter J.C."/>
        </authorList>
    </citation>
    <scope>NUCLEOTIDE SEQUENCE [LARGE SCALE GENOMIC DNA]</scope>
</reference>
<reference key="4">
    <citation type="journal article" date="2004" name="Genome Res.">
        <title>The status, quality, and expansion of the NIH full-length cDNA project: the Mammalian Gene Collection (MGC).</title>
        <authorList>
            <consortium name="The MGC Project Team"/>
        </authorList>
    </citation>
    <scope>NUCLEOTIDE SEQUENCE [LARGE SCALE MRNA]</scope>
    <source>
        <tissue>Blood</tissue>
    </source>
</reference>
<reference key="5">
    <citation type="journal article" date="2003" name="Mol. Immunol.">
        <title>Specific over-expression of deltex and a new Kelch-like protein in human germinal center B cells.</title>
        <authorList>
            <person name="Gupta-Rossi N."/>
            <person name="Storck S."/>
            <person name="Griebel P.J."/>
            <person name="Reynaud C.-A."/>
            <person name="Weill J.-C."/>
            <person name="Dahan A."/>
        </authorList>
    </citation>
    <scope>NUCLEOTIDE SEQUENCE [MRNA] OF 11-621</scope>
    <scope>TISSUE SPECIFICITY</scope>
</reference>
<protein>
    <recommendedName>
        <fullName>Kelch-like protein 6</fullName>
    </recommendedName>
</protein>
<gene>
    <name type="primary">KLHL6</name>
</gene>
<name>KLHL6_HUMAN</name>
<keyword id="KW-0880">Kelch repeat</keyword>
<keyword id="KW-1267">Proteomics identification</keyword>
<keyword id="KW-1185">Reference proteome</keyword>
<keyword id="KW-0677">Repeat</keyword>
<dbReference type="EMBL" id="AK097125">
    <property type="protein sequence ID" value="BAC04957.1"/>
    <property type="molecule type" value="mRNA"/>
</dbReference>
<dbReference type="EMBL" id="AK314473">
    <property type="protein sequence ID" value="BAG37078.1"/>
    <property type="status" value="ALT_INIT"/>
    <property type="molecule type" value="mRNA"/>
</dbReference>
<dbReference type="EMBL" id="AC092960">
    <property type="status" value="NOT_ANNOTATED_CDS"/>
    <property type="molecule type" value="Genomic_DNA"/>
</dbReference>
<dbReference type="EMBL" id="AC069211">
    <property type="status" value="NOT_ANNOTATED_CDS"/>
    <property type="molecule type" value="Genomic_DNA"/>
</dbReference>
<dbReference type="EMBL" id="CH471052">
    <property type="protein sequence ID" value="EAW78324.1"/>
    <property type="molecule type" value="Genomic_DNA"/>
</dbReference>
<dbReference type="EMBL" id="CH471052">
    <property type="protein sequence ID" value="EAW78325.1"/>
    <property type="molecule type" value="Genomic_DNA"/>
</dbReference>
<dbReference type="EMBL" id="BC032348">
    <property type="protein sequence ID" value="AAH32348.1"/>
    <property type="status" value="ALT_INIT"/>
    <property type="molecule type" value="mRNA"/>
</dbReference>
<dbReference type="EMBL" id="AF441792">
    <property type="protein sequence ID" value="AAL35594.1"/>
    <property type="status" value="ALT_INIT"/>
    <property type="molecule type" value="mRNA"/>
</dbReference>
<dbReference type="CCDS" id="CCDS3245.2"/>
<dbReference type="RefSeq" id="NP_569713.2">
    <property type="nucleotide sequence ID" value="NM_130446.4"/>
</dbReference>
<dbReference type="SMR" id="Q8WZ60"/>
<dbReference type="BioGRID" id="124622">
    <property type="interactions" value="31"/>
</dbReference>
<dbReference type="ComplexPortal" id="CPX-8064">
    <property type="entry name" value="CRL3 E3 ubiquitin ligase complex, KLHL6 variant"/>
</dbReference>
<dbReference type="FunCoup" id="Q8WZ60">
    <property type="interactions" value="88"/>
</dbReference>
<dbReference type="IntAct" id="Q8WZ60">
    <property type="interactions" value="16"/>
</dbReference>
<dbReference type="STRING" id="9606.ENSP00000341342"/>
<dbReference type="iPTMnet" id="Q8WZ60"/>
<dbReference type="PhosphoSitePlus" id="Q8WZ60"/>
<dbReference type="BioMuta" id="KLHL6"/>
<dbReference type="DMDM" id="229462964"/>
<dbReference type="jPOST" id="Q8WZ60"/>
<dbReference type="MassIVE" id="Q8WZ60"/>
<dbReference type="PaxDb" id="9606-ENSP00000341342"/>
<dbReference type="PeptideAtlas" id="Q8WZ60"/>
<dbReference type="ProteomicsDB" id="75222"/>
<dbReference type="TopDownProteomics" id="Q8WZ60"/>
<dbReference type="Antibodypedia" id="18928">
    <property type="antibodies" value="101 antibodies from 24 providers"/>
</dbReference>
<dbReference type="DNASU" id="89857"/>
<dbReference type="Ensembl" id="ENST00000341319.8">
    <property type="protein sequence ID" value="ENSP00000341342.3"/>
    <property type="gene ID" value="ENSG00000172578.12"/>
</dbReference>
<dbReference type="GeneID" id="89857"/>
<dbReference type="KEGG" id="hsa:89857"/>
<dbReference type="MANE-Select" id="ENST00000341319.8">
    <property type="protein sequence ID" value="ENSP00000341342.3"/>
    <property type="RefSeq nucleotide sequence ID" value="NM_130446.4"/>
    <property type="RefSeq protein sequence ID" value="NP_569713.2"/>
</dbReference>
<dbReference type="UCSC" id="uc003flr.4">
    <property type="organism name" value="human"/>
</dbReference>
<dbReference type="AGR" id="HGNC:18653"/>
<dbReference type="CTD" id="89857"/>
<dbReference type="DisGeNET" id="89857"/>
<dbReference type="GeneCards" id="KLHL6"/>
<dbReference type="HGNC" id="HGNC:18653">
    <property type="gene designation" value="KLHL6"/>
</dbReference>
<dbReference type="HPA" id="ENSG00000172578">
    <property type="expression patterns" value="Tissue enriched (lymphoid)"/>
</dbReference>
<dbReference type="MalaCards" id="KLHL6"/>
<dbReference type="MIM" id="614214">
    <property type="type" value="gene"/>
</dbReference>
<dbReference type="neXtProt" id="NX_Q8WZ60"/>
<dbReference type="OpenTargets" id="ENSG00000172578"/>
<dbReference type="PharmGKB" id="PA38621"/>
<dbReference type="VEuPathDB" id="HostDB:ENSG00000172578"/>
<dbReference type="eggNOG" id="KOG4441">
    <property type="taxonomic scope" value="Eukaryota"/>
</dbReference>
<dbReference type="GeneTree" id="ENSGT00940000154345"/>
<dbReference type="HOGENOM" id="CLU_004253_14_2_1"/>
<dbReference type="InParanoid" id="Q8WZ60"/>
<dbReference type="OMA" id="WYFVEMV"/>
<dbReference type="OrthoDB" id="19132at2759"/>
<dbReference type="PAN-GO" id="Q8WZ60">
    <property type="GO annotations" value="0 GO annotations based on evolutionary models"/>
</dbReference>
<dbReference type="PhylomeDB" id="Q8WZ60"/>
<dbReference type="TreeFam" id="TF351654"/>
<dbReference type="PathwayCommons" id="Q8WZ60"/>
<dbReference type="SignaLink" id="Q8WZ60"/>
<dbReference type="SIGNOR" id="Q8WZ60"/>
<dbReference type="BioGRID-ORCS" id="89857">
    <property type="hits" value="13 hits in 1194 CRISPR screens"/>
</dbReference>
<dbReference type="ChiTaRS" id="KLHL6">
    <property type="organism name" value="human"/>
</dbReference>
<dbReference type="GenomeRNAi" id="89857"/>
<dbReference type="Pharos" id="Q8WZ60">
    <property type="development level" value="Tbio"/>
</dbReference>
<dbReference type="PRO" id="PR:Q8WZ60"/>
<dbReference type="Proteomes" id="UP000005640">
    <property type="component" value="Chromosome 3"/>
</dbReference>
<dbReference type="RNAct" id="Q8WZ60">
    <property type="molecule type" value="protein"/>
</dbReference>
<dbReference type="Bgee" id="ENSG00000172578">
    <property type="expression patterns" value="Expressed in epithelium of nasopharynx and 141 other cell types or tissues"/>
</dbReference>
<dbReference type="ExpressionAtlas" id="Q8WZ60">
    <property type="expression patterns" value="baseline and differential"/>
</dbReference>
<dbReference type="GO" id="GO:0031463">
    <property type="term" value="C:Cul3-RING ubiquitin ligase complex"/>
    <property type="evidence" value="ECO:0000318"/>
    <property type="project" value="GO_Central"/>
</dbReference>
<dbReference type="GO" id="GO:0005737">
    <property type="term" value="C:cytoplasm"/>
    <property type="evidence" value="ECO:0000318"/>
    <property type="project" value="GO_Central"/>
</dbReference>
<dbReference type="GO" id="GO:1990756">
    <property type="term" value="F:ubiquitin-like ligase-substrate adaptor activity"/>
    <property type="evidence" value="ECO:0000318"/>
    <property type="project" value="GO_Central"/>
</dbReference>
<dbReference type="GO" id="GO:0050853">
    <property type="term" value="P:B cell receptor signaling pathway"/>
    <property type="evidence" value="ECO:0007669"/>
    <property type="project" value="Ensembl"/>
</dbReference>
<dbReference type="GO" id="GO:0002467">
    <property type="term" value="P:germinal center formation"/>
    <property type="evidence" value="ECO:0007669"/>
    <property type="project" value="Ensembl"/>
</dbReference>
<dbReference type="GO" id="GO:0043161">
    <property type="term" value="P:proteasome-mediated ubiquitin-dependent protein catabolic process"/>
    <property type="evidence" value="ECO:0000318"/>
    <property type="project" value="GO_Central"/>
</dbReference>
<dbReference type="GO" id="GO:0009617">
    <property type="term" value="P:response to bacterium"/>
    <property type="evidence" value="ECO:0007669"/>
    <property type="project" value="Ensembl"/>
</dbReference>
<dbReference type="CDD" id="cd18446">
    <property type="entry name" value="BACK_KLHL6"/>
    <property type="match status" value="1"/>
</dbReference>
<dbReference type="CDD" id="cd18236">
    <property type="entry name" value="BTB_POZ_KLHL6"/>
    <property type="match status" value="1"/>
</dbReference>
<dbReference type="FunFam" id="1.25.40.420:FF:000020">
    <property type="entry name" value="Kelch-like 6 (Drosophila) (Predicted)"/>
    <property type="match status" value="1"/>
</dbReference>
<dbReference type="FunFam" id="2.120.10.80:FF:000068">
    <property type="entry name" value="Kelch-like 6 (Drosophila) (Predicted)"/>
    <property type="match status" value="1"/>
</dbReference>
<dbReference type="FunFam" id="3.30.710.10:FF:000103">
    <property type="entry name" value="Kelch-like 6 (Drosophila) (Predicted)"/>
    <property type="match status" value="1"/>
</dbReference>
<dbReference type="Gene3D" id="1.25.40.420">
    <property type="match status" value="1"/>
</dbReference>
<dbReference type="Gene3D" id="2.120.10.80">
    <property type="entry name" value="Kelch-type beta propeller"/>
    <property type="match status" value="1"/>
</dbReference>
<dbReference type="Gene3D" id="3.30.710.10">
    <property type="entry name" value="Potassium Channel Kv1.1, Chain A"/>
    <property type="match status" value="1"/>
</dbReference>
<dbReference type="InterPro" id="IPR011705">
    <property type="entry name" value="BACK"/>
</dbReference>
<dbReference type="InterPro" id="IPR017096">
    <property type="entry name" value="BTB-kelch_protein"/>
</dbReference>
<dbReference type="InterPro" id="IPR000210">
    <property type="entry name" value="BTB/POZ_dom"/>
</dbReference>
<dbReference type="InterPro" id="IPR029851">
    <property type="entry name" value="BTB_POZ_KLHL6"/>
</dbReference>
<dbReference type="InterPro" id="IPR015915">
    <property type="entry name" value="Kelch-typ_b-propeller"/>
</dbReference>
<dbReference type="InterPro" id="IPR006652">
    <property type="entry name" value="Kelch_1"/>
</dbReference>
<dbReference type="InterPro" id="IPR011333">
    <property type="entry name" value="SKP1/BTB/POZ_sf"/>
</dbReference>
<dbReference type="PANTHER" id="PTHR24412">
    <property type="entry name" value="KELCH PROTEIN"/>
    <property type="match status" value="1"/>
</dbReference>
<dbReference type="PANTHER" id="PTHR24412:SF428">
    <property type="entry name" value="KELCH-LIKE PROTEIN 6"/>
    <property type="match status" value="1"/>
</dbReference>
<dbReference type="Pfam" id="PF07707">
    <property type="entry name" value="BACK"/>
    <property type="match status" value="1"/>
</dbReference>
<dbReference type="Pfam" id="PF00651">
    <property type="entry name" value="BTB"/>
    <property type="match status" value="1"/>
</dbReference>
<dbReference type="Pfam" id="PF01344">
    <property type="entry name" value="Kelch_1"/>
    <property type="match status" value="1"/>
</dbReference>
<dbReference type="Pfam" id="PF24681">
    <property type="entry name" value="Kelch_KLHDC2_KLHL20_DRC7"/>
    <property type="match status" value="1"/>
</dbReference>
<dbReference type="PIRSF" id="PIRSF037037">
    <property type="entry name" value="Kelch-like_protein_gigaxonin"/>
    <property type="match status" value="1"/>
</dbReference>
<dbReference type="SMART" id="SM00875">
    <property type="entry name" value="BACK"/>
    <property type="match status" value="1"/>
</dbReference>
<dbReference type="SMART" id="SM00225">
    <property type="entry name" value="BTB"/>
    <property type="match status" value="1"/>
</dbReference>
<dbReference type="SMART" id="SM00612">
    <property type="entry name" value="Kelch"/>
    <property type="match status" value="5"/>
</dbReference>
<dbReference type="SUPFAM" id="SSF117281">
    <property type="entry name" value="Kelch motif"/>
    <property type="match status" value="1"/>
</dbReference>
<dbReference type="SUPFAM" id="SSF54695">
    <property type="entry name" value="POZ domain"/>
    <property type="match status" value="1"/>
</dbReference>
<dbReference type="PROSITE" id="PS50097">
    <property type="entry name" value="BTB"/>
    <property type="match status" value="1"/>
</dbReference>